<name>DNAA_NEIMF</name>
<accession>A1KS02</accession>
<evidence type="ECO:0000255" key="1">
    <source>
        <dbReference type="HAMAP-Rule" id="MF_00377"/>
    </source>
</evidence>
<organism>
    <name type="scientific">Neisseria meningitidis serogroup C / serotype 2a (strain ATCC 700532 / DSM 15464 / FAM18)</name>
    <dbReference type="NCBI Taxonomy" id="272831"/>
    <lineage>
        <taxon>Bacteria</taxon>
        <taxon>Pseudomonadati</taxon>
        <taxon>Pseudomonadota</taxon>
        <taxon>Betaproteobacteria</taxon>
        <taxon>Neisseriales</taxon>
        <taxon>Neisseriaceae</taxon>
        <taxon>Neisseria</taxon>
    </lineage>
</organism>
<protein>
    <recommendedName>
        <fullName evidence="1">Chromosomal replication initiator protein DnaA</fullName>
    </recommendedName>
</protein>
<keyword id="KW-0067">ATP-binding</keyword>
<keyword id="KW-0963">Cytoplasm</keyword>
<keyword id="KW-0235">DNA replication</keyword>
<keyword id="KW-0238">DNA-binding</keyword>
<keyword id="KW-0446">Lipid-binding</keyword>
<keyword id="KW-0547">Nucleotide-binding</keyword>
<reference key="1">
    <citation type="journal article" date="2007" name="PLoS Genet.">
        <title>Meningococcal genetic variation mechanisms viewed through comparative analysis of serogroup C strain FAM18.</title>
        <authorList>
            <person name="Bentley S.D."/>
            <person name="Vernikos G.S."/>
            <person name="Snyder L.A.S."/>
            <person name="Churcher C."/>
            <person name="Arrowsmith C."/>
            <person name="Chillingworth T."/>
            <person name="Cronin A."/>
            <person name="Davis P.H."/>
            <person name="Holroyd N.E."/>
            <person name="Jagels K."/>
            <person name="Maddison M."/>
            <person name="Moule S."/>
            <person name="Rabbinowitsch E."/>
            <person name="Sharp S."/>
            <person name="Unwin L."/>
            <person name="Whitehead S."/>
            <person name="Quail M.A."/>
            <person name="Achtman M."/>
            <person name="Barrell B.G."/>
            <person name="Saunders N.J."/>
            <person name="Parkhill J."/>
        </authorList>
    </citation>
    <scope>NUCLEOTIDE SEQUENCE [LARGE SCALE GENOMIC DNA]</scope>
    <source>
        <strain>ATCC 700532 / DSM 15464 / FAM18</strain>
    </source>
</reference>
<feature type="chain" id="PRO_1000048677" description="Chromosomal replication initiator protein DnaA">
    <location>
        <begin position="1"/>
        <end position="518"/>
    </location>
</feature>
<feature type="region of interest" description="Domain I, interacts with DnaA modulators" evidence="1">
    <location>
        <begin position="1"/>
        <end position="72"/>
    </location>
</feature>
<feature type="region of interest" description="Domain II" evidence="1">
    <location>
        <begin position="72"/>
        <end position="180"/>
    </location>
</feature>
<feature type="region of interest" description="Domain III, AAA+ region" evidence="1">
    <location>
        <begin position="181"/>
        <end position="397"/>
    </location>
</feature>
<feature type="region of interest" description="Domain IV, binds dsDNA" evidence="1">
    <location>
        <begin position="398"/>
        <end position="518"/>
    </location>
</feature>
<feature type="binding site" evidence="1">
    <location>
        <position position="225"/>
    </location>
    <ligand>
        <name>ATP</name>
        <dbReference type="ChEBI" id="CHEBI:30616"/>
    </ligand>
</feature>
<feature type="binding site" evidence="1">
    <location>
        <position position="227"/>
    </location>
    <ligand>
        <name>ATP</name>
        <dbReference type="ChEBI" id="CHEBI:30616"/>
    </ligand>
</feature>
<feature type="binding site" evidence="1">
    <location>
        <position position="228"/>
    </location>
    <ligand>
        <name>ATP</name>
        <dbReference type="ChEBI" id="CHEBI:30616"/>
    </ligand>
</feature>
<feature type="binding site" evidence="1">
    <location>
        <position position="229"/>
    </location>
    <ligand>
        <name>ATP</name>
        <dbReference type="ChEBI" id="CHEBI:30616"/>
    </ligand>
</feature>
<dbReference type="EMBL" id="AM421808">
    <property type="protein sequence ID" value="CAM09631.1"/>
    <property type="molecule type" value="Genomic_DNA"/>
</dbReference>
<dbReference type="RefSeq" id="WP_002221548.1">
    <property type="nucleotide sequence ID" value="NC_008767.1"/>
</dbReference>
<dbReference type="SMR" id="A1KS02"/>
<dbReference type="KEGG" id="nmc:NMC0320"/>
<dbReference type="HOGENOM" id="CLU_026910_0_1_4"/>
<dbReference type="Proteomes" id="UP000002286">
    <property type="component" value="Chromosome"/>
</dbReference>
<dbReference type="GO" id="GO:0005737">
    <property type="term" value="C:cytoplasm"/>
    <property type="evidence" value="ECO:0007669"/>
    <property type="project" value="UniProtKB-SubCell"/>
</dbReference>
<dbReference type="GO" id="GO:0005886">
    <property type="term" value="C:plasma membrane"/>
    <property type="evidence" value="ECO:0007669"/>
    <property type="project" value="TreeGrafter"/>
</dbReference>
<dbReference type="GO" id="GO:0005524">
    <property type="term" value="F:ATP binding"/>
    <property type="evidence" value="ECO:0007669"/>
    <property type="project" value="UniProtKB-UniRule"/>
</dbReference>
<dbReference type="GO" id="GO:0016887">
    <property type="term" value="F:ATP hydrolysis activity"/>
    <property type="evidence" value="ECO:0007669"/>
    <property type="project" value="InterPro"/>
</dbReference>
<dbReference type="GO" id="GO:0003688">
    <property type="term" value="F:DNA replication origin binding"/>
    <property type="evidence" value="ECO:0007669"/>
    <property type="project" value="UniProtKB-UniRule"/>
</dbReference>
<dbReference type="GO" id="GO:0008289">
    <property type="term" value="F:lipid binding"/>
    <property type="evidence" value="ECO:0007669"/>
    <property type="project" value="UniProtKB-KW"/>
</dbReference>
<dbReference type="GO" id="GO:0006270">
    <property type="term" value="P:DNA replication initiation"/>
    <property type="evidence" value="ECO:0007669"/>
    <property type="project" value="UniProtKB-UniRule"/>
</dbReference>
<dbReference type="GO" id="GO:0006275">
    <property type="term" value="P:regulation of DNA replication"/>
    <property type="evidence" value="ECO:0007669"/>
    <property type="project" value="UniProtKB-UniRule"/>
</dbReference>
<dbReference type="CDD" id="cd00009">
    <property type="entry name" value="AAA"/>
    <property type="match status" value="1"/>
</dbReference>
<dbReference type="CDD" id="cd06571">
    <property type="entry name" value="Bac_DnaA_C"/>
    <property type="match status" value="1"/>
</dbReference>
<dbReference type="FunFam" id="1.10.1750.10:FF:000006">
    <property type="entry name" value="Chromosomal replication initiator protein DnaA"/>
    <property type="match status" value="1"/>
</dbReference>
<dbReference type="FunFam" id="1.10.8.60:FF:000003">
    <property type="entry name" value="Chromosomal replication initiator protein DnaA"/>
    <property type="match status" value="1"/>
</dbReference>
<dbReference type="FunFam" id="3.40.50.300:FF:000668">
    <property type="entry name" value="Chromosomal replication initiator protein DnaA"/>
    <property type="match status" value="1"/>
</dbReference>
<dbReference type="Gene3D" id="1.10.1750.10">
    <property type="match status" value="1"/>
</dbReference>
<dbReference type="Gene3D" id="1.10.8.60">
    <property type="match status" value="1"/>
</dbReference>
<dbReference type="Gene3D" id="3.30.300.180">
    <property type="match status" value="1"/>
</dbReference>
<dbReference type="Gene3D" id="3.40.50.300">
    <property type="entry name" value="P-loop containing nucleotide triphosphate hydrolases"/>
    <property type="match status" value="1"/>
</dbReference>
<dbReference type="HAMAP" id="MF_00377">
    <property type="entry name" value="DnaA_bact"/>
    <property type="match status" value="1"/>
</dbReference>
<dbReference type="InterPro" id="IPR003593">
    <property type="entry name" value="AAA+_ATPase"/>
</dbReference>
<dbReference type="InterPro" id="IPR001957">
    <property type="entry name" value="Chromosome_initiator_DnaA"/>
</dbReference>
<dbReference type="InterPro" id="IPR020591">
    <property type="entry name" value="Chromosome_initiator_DnaA-like"/>
</dbReference>
<dbReference type="InterPro" id="IPR018312">
    <property type="entry name" value="Chromosome_initiator_DnaA_CS"/>
</dbReference>
<dbReference type="InterPro" id="IPR013159">
    <property type="entry name" value="DnaA_C"/>
</dbReference>
<dbReference type="InterPro" id="IPR013317">
    <property type="entry name" value="DnaA_dom"/>
</dbReference>
<dbReference type="InterPro" id="IPR024633">
    <property type="entry name" value="DnaA_N_dom"/>
</dbReference>
<dbReference type="InterPro" id="IPR038454">
    <property type="entry name" value="DnaA_N_sf"/>
</dbReference>
<dbReference type="InterPro" id="IPR027417">
    <property type="entry name" value="P-loop_NTPase"/>
</dbReference>
<dbReference type="InterPro" id="IPR010921">
    <property type="entry name" value="Trp_repressor/repl_initiator"/>
</dbReference>
<dbReference type="NCBIfam" id="TIGR00362">
    <property type="entry name" value="DnaA"/>
    <property type="match status" value="1"/>
</dbReference>
<dbReference type="PANTHER" id="PTHR30050">
    <property type="entry name" value="CHROMOSOMAL REPLICATION INITIATOR PROTEIN DNAA"/>
    <property type="match status" value="1"/>
</dbReference>
<dbReference type="PANTHER" id="PTHR30050:SF2">
    <property type="entry name" value="CHROMOSOMAL REPLICATION INITIATOR PROTEIN DNAA"/>
    <property type="match status" value="1"/>
</dbReference>
<dbReference type="Pfam" id="PF00308">
    <property type="entry name" value="Bac_DnaA"/>
    <property type="match status" value="1"/>
</dbReference>
<dbReference type="Pfam" id="PF08299">
    <property type="entry name" value="Bac_DnaA_C"/>
    <property type="match status" value="1"/>
</dbReference>
<dbReference type="Pfam" id="PF11638">
    <property type="entry name" value="DnaA_N"/>
    <property type="match status" value="1"/>
</dbReference>
<dbReference type="PRINTS" id="PR00051">
    <property type="entry name" value="DNAA"/>
</dbReference>
<dbReference type="SMART" id="SM00382">
    <property type="entry name" value="AAA"/>
    <property type="match status" value="1"/>
</dbReference>
<dbReference type="SMART" id="SM00760">
    <property type="entry name" value="Bac_DnaA_C"/>
    <property type="match status" value="1"/>
</dbReference>
<dbReference type="SUPFAM" id="SSF52540">
    <property type="entry name" value="P-loop containing nucleoside triphosphate hydrolases"/>
    <property type="match status" value="1"/>
</dbReference>
<dbReference type="SUPFAM" id="SSF48295">
    <property type="entry name" value="TrpR-like"/>
    <property type="match status" value="1"/>
</dbReference>
<dbReference type="PROSITE" id="PS01008">
    <property type="entry name" value="DNAA"/>
    <property type="match status" value="1"/>
</dbReference>
<gene>
    <name evidence="1" type="primary">dnaA</name>
    <name type="ordered locus">NMC0320</name>
</gene>
<sequence length="518" mass="58224">MTLAEFWPLCLRRLHDMLPQGQFAQWIAPLTVGEEGGVWVVYGKNQFACNMLKSQFAGKIEAVREELAAGRSAFVFKPGEGVRYEMAAVEGAVEPAEPSLHAGSEEMPVQEVLLDELPSEEPVKPAASKTAADILAERMKNLPHEPRHTAEPASRPESEVLAKARTDAQRDAEEARYEQTNLSPDYTFDTLVEGKGNRLAAAAAQAIAESPGQSYNPFFLYGSTGLGKTHLVQAVGNELLKNRPDAKVRYMHSDDYIRSFMKAVRNNTYDVFKQQYKQYDLLIIDDIQFIKGKDRTMEEFFYLYNHFHNEKKQLILTCDVLPAKIEGMDDRLKSRFSWGLTLELEPPELEMRIAILQKKAEAAGISIEDEAALFIANLIRSNVRELEGAFNRVGASSRFMNRPVIDIDLARTALQDIIAEKHKVITADIIIDAVAKYYRIKISDVLGKKRTRNIARPRQVAMSLTKELTTLSLPSIGDSFGGRDHTTVMHGIRAVAKLREEDPELAQDYEKLLILIQN</sequence>
<proteinExistence type="inferred from homology"/>
<comment type="function">
    <text evidence="1">Plays an essential role in the initiation and regulation of chromosomal replication. ATP-DnaA binds to the origin of replication (oriC) to initiate formation of the DNA replication initiation complex once per cell cycle. Binds the DnaA box (a 9 base pair repeat at the origin) and separates the double-stranded (ds)DNA. Forms a right-handed helical filament on oriC DNA; dsDNA binds to the exterior of the filament while single-stranded (ss)DNA is stabiized in the filament's interior. The ATP-DnaA-oriC complex binds and stabilizes one strand of the AT-rich DNA unwinding element (DUE), permitting loading of DNA polymerase. After initiation quickly degrades to an ADP-DnaA complex that is not apt for DNA replication. Binds acidic phospholipids.</text>
</comment>
<comment type="subunit">
    <text evidence="1">Oligomerizes as a right-handed, spiral filament on DNA at oriC.</text>
</comment>
<comment type="subcellular location">
    <subcellularLocation>
        <location evidence="1">Cytoplasm</location>
    </subcellularLocation>
</comment>
<comment type="domain">
    <text evidence="1">Domain I is involved in oligomerization and binding regulators, domain II is flexibile and of varying length in different bacteria, domain III forms the AAA+ region, while domain IV binds dsDNA.</text>
</comment>
<comment type="similarity">
    <text evidence="1">Belongs to the DnaA family.</text>
</comment>